<name>UREE_HAEI8</name>
<reference key="1">
    <citation type="journal article" date="2005" name="J. Bacteriol.">
        <title>Genomic sequence of an otitis media isolate of nontypeable Haemophilus influenzae: comparative study with H. influenzae serotype d, strain KW20.</title>
        <authorList>
            <person name="Harrison A."/>
            <person name="Dyer D.W."/>
            <person name="Gillaspy A."/>
            <person name="Ray W.C."/>
            <person name="Mungur R."/>
            <person name="Carson M.B."/>
            <person name="Zhong H."/>
            <person name="Gipson J."/>
            <person name="Gipson M."/>
            <person name="Johnson L.S."/>
            <person name="Lewis L."/>
            <person name="Bakaletz L.O."/>
            <person name="Munson R.S. Jr."/>
        </authorList>
    </citation>
    <scope>NUCLEOTIDE SEQUENCE [LARGE SCALE GENOMIC DNA]</scope>
    <source>
        <strain>86-028NP</strain>
    </source>
</reference>
<sequence length="185" mass="21067">MKIINPILPIIENILGNLTALQAEGKITTQPIERVALQWYESERNILRKTTNTGREVAFRLLKEGQRLKHDDVVFISDELVIAIEILPSDVIVLSPKTLPEMARACYEIGNKHSPLFLDGDEVTLPYDKPMFEWLQAAGFHPQKAERRLSQALRANSAQGHGHSHSHSHDHHGYHHHGDGHWHKH</sequence>
<organism>
    <name type="scientific">Haemophilus influenzae (strain 86-028NP)</name>
    <dbReference type="NCBI Taxonomy" id="281310"/>
    <lineage>
        <taxon>Bacteria</taxon>
        <taxon>Pseudomonadati</taxon>
        <taxon>Pseudomonadota</taxon>
        <taxon>Gammaproteobacteria</taxon>
        <taxon>Pasteurellales</taxon>
        <taxon>Pasteurellaceae</taxon>
        <taxon>Haemophilus</taxon>
    </lineage>
</organism>
<proteinExistence type="inferred from homology"/>
<accession>Q4QN10</accession>
<protein>
    <recommendedName>
        <fullName evidence="1">Urease accessory protein UreE</fullName>
    </recommendedName>
</protein>
<comment type="function">
    <text evidence="1">Involved in urease metallocenter assembly. Binds nickel. Probably functions as a nickel donor during metallocenter assembly.</text>
</comment>
<comment type="subcellular location">
    <subcellularLocation>
        <location evidence="1">Cytoplasm</location>
    </subcellularLocation>
</comment>
<comment type="similarity">
    <text evidence="1">Belongs to the UreE family.</text>
</comment>
<keyword id="KW-0143">Chaperone</keyword>
<keyword id="KW-0963">Cytoplasm</keyword>
<keyword id="KW-0533">Nickel</keyword>
<keyword id="KW-0996">Nickel insertion</keyword>
<gene>
    <name evidence="1" type="primary">ureE</name>
    <name type="ordered locus">NTHI0664</name>
</gene>
<dbReference type="EMBL" id="CP000057">
    <property type="protein sequence ID" value="AAX87587.1"/>
    <property type="molecule type" value="Genomic_DNA"/>
</dbReference>
<dbReference type="RefSeq" id="WP_005688622.1">
    <property type="nucleotide sequence ID" value="NC_007146.2"/>
</dbReference>
<dbReference type="SMR" id="Q4QN10"/>
<dbReference type="GeneID" id="93219547"/>
<dbReference type="KEGG" id="hit:NTHI0664"/>
<dbReference type="HOGENOM" id="CLU_093757_3_0_6"/>
<dbReference type="Proteomes" id="UP000002525">
    <property type="component" value="Chromosome"/>
</dbReference>
<dbReference type="GO" id="GO:0005737">
    <property type="term" value="C:cytoplasm"/>
    <property type="evidence" value="ECO:0007669"/>
    <property type="project" value="UniProtKB-SubCell"/>
</dbReference>
<dbReference type="GO" id="GO:0016151">
    <property type="term" value="F:nickel cation binding"/>
    <property type="evidence" value="ECO:0007669"/>
    <property type="project" value="UniProtKB-UniRule"/>
</dbReference>
<dbReference type="GO" id="GO:0051082">
    <property type="term" value="F:unfolded protein binding"/>
    <property type="evidence" value="ECO:0007669"/>
    <property type="project" value="UniProtKB-UniRule"/>
</dbReference>
<dbReference type="GO" id="GO:0006457">
    <property type="term" value="P:protein folding"/>
    <property type="evidence" value="ECO:0007669"/>
    <property type="project" value="InterPro"/>
</dbReference>
<dbReference type="GO" id="GO:0065003">
    <property type="term" value="P:protein-containing complex assembly"/>
    <property type="evidence" value="ECO:0007669"/>
    <property type="project" value="InterPro"/>
</dbReference>
<dbReference type="GO" id="GO:0019627">
    <property type="term" value="P:urea metabolic process"/>
    <property type="evidence" value="ECO:0007669"/>
    <property type="project" value="InterPro"/>
</dbReference>
<dbReference type="CDD" id="cd00571">
    <property type="entry name" value="UreE"/>
    <property type="match status" value="1"/>
</dbReference>
<dbReference type="Gene3D" id="2.60.260.20">
    <property type="entry name" value="Urease metallochaperone UreE, N-terminal domain"/>
    <property type="match status" value="1"/>
</dbReference>
<dbReference type="Gene3D" id="3.30.70.790">
    <property type="entry name" value="UreE, C-terminal domain"/>
    <property type="match status" value="1"/>
</dbReference>
<dbReference type="HAMAP" id="MF_00822">
    <property type="entry name" value="UreE"/>
    <property type="match status" value="1"/>
</dbReference>
<dbReference type="InterPro" id="IPR012406">
    <property type="entry name" value="UreE"/>
</dbReference>
<dbReference type="InterPro" id="IPR007864">
    <property type="entry name" value="UreE_C_dom"/>
</dbReference>
<dbReference type="InterPro" id="IPR004029">
    <property type="entry name" value="UreE_N"/>
</dbReference>
<dbReference type="InterPro" id="IPR036118">
    <property type="entry name" value="UreE_N_sf"/>
</dbReference>
<dbReference type="NCBIfam" id="NF009754">
    <property type="entry name" value="PRK13261.1-6"/>
    <property type="match status" value="1"/>
</dbReference>
<dbReference type="Pfam" id="PF05194">
    <property type="entry name" value="UreE_C"/>
    <property type="match status" value="1"/>
</dbReference>
<dbReference type="Pfam" id="PF02814">
    <property type="entry name" value="UreE_N"/>
    <property type="match status" value="1"/>
</dbReference>
<dbReference type="PIRSF" id="PIRSF036402">
    <property type="entry name" value="Ureas_acces_UreE"/>
    <property type="match status" value="1"/>
</dbReference>
<dbReference type="SMART" id="SM00988">
    <property type="entry name" value="UreE_N"/>
    <property type="match status" value="1"/>
</dbReference>
<dbReference type="SUPFAM" id="SSF69737">
    <property type="entry name" value="Urease metallochaperone UreE, C-terminal domain"/>
    <property type="match status" value="1"/>
</dbReference>
<dbReference type="SUPFAM" id="SSF69287">
    <property type="entry name" value="Urease metallochaperone UreE, N-terminal domain"/>
    <property type="match status" value="1"/>
</dbReference>
<feature type="chain" id="PRO_0000223416" description="Urease accessory protein UreE">
    <location>
        <begin position="1"/>
        <end position="185"/>
    </location>
</feature>
<feature type="region of interest" description="Disordered" evidence="2">
    <location>
        <begin position="153"/>
        <end position="185"/>
    </location>
</feature>
<feature type="compositionally biased region" description="Basic residues" evidence="2">
    <location>
        <begin position="162"/>
        <end position="175"/>
    </location>
</feature>
<feature type="compositionally biased region" description="Basic and acidic residues" evidence="2">
    <location>
        <begin position="176"/>
        <end position="185"/>
    </location>
</feature>
<evidence type="ECO:0000255" key="1">
    <source>
        <dbReference type="HAMAP-Rule" id="MF_00822"/>
    </source>
</evidence>
<evidence type="ECO:0000256" key="2">
    <source>
        <dbReference type="SAM" id="MobiDB-lite"/>
    </source>
</evidence>